<evidence type="ECO:0000255" key="1">
    <source>
        <dbReference type="HAMAP-Rule" id="MF_00168"/>
    </source>
</evidence>
<organism>
    <name type="scientific">Prochlorococcus marinus (strain MIT 9313)</name>
    <dbReference type="NCBI Taxonomy" id="74547"/>
    <lineage>
        <taxon>Bacteria</taxon>
        <taxon>Bacillati</taxon>
        <taxon>Cyanobacteriota</taxon>
        <taxon>Cyanophyceae</taxon>
        <taxon>Synechococcales</taxon>
        <taxon>Prochlorococcaceae</taxon>
        <taxon>Prochlorococcus</taxon>
    </lineage>
</organism>
<protein>
    <recommendedName>
        <fullName evidence="1">Queuine tRNA-ribosyltransferase</fullName>
        <ecNumber evidence="1">2.4.2.29</ecNumber>
    </recommendedName>
    <alternativeName>
        <fullName evidence="1">Guanine insertion enzyme</fullName>
    </alternativeName>
    <alternativeName>
        <fullName evidence="1">tRNA-guanine transglycosylase</fullName>
    </alternativeName>
</protein>
<dbReference type="EC" id="2.4.2.29" evidence="1"/>
<dbReference type="EMBL" id="BX548175">
    <property type="protein sequence ID" value="CAE22037.1"/>
    <property type="molecule type" value="Genomic_DNA"/>
</dbReference>
<dbReference type="RefSeq" id="WP_011131229.1">
    <property type="nucleotide sequence ID" value="NC_005071.1"/>
</dbReference>
<dbReference type="SMR" id="Q7TUM6"/>
<dbReference type="KEGG" id="pmt:PMT_1862"/>
<dbReference type="eggNOG" id="COG0343">
    <property type="taxonomic scope" value="Bacteria"/>
</dbReference>
<dbReference type="HOGENOM" id="CLU_022060_0_1_3"/>
<dbReference type="OrthoDB" id="9805417at2"/>
<dbReference type="UniPathway" id="UPA00392"/>
<dbReference type="Proteomes" id="UP000001423">
    <property type="component" value="Chromosome"/>
</dbReference>
<dbReference type="GO" id="GO:0005829">
    <property type="term" value="C:cytosol"/>
    <property type="evidence" value="ECO:0007669"/>
    <property type="project" value="TreeGrafter"/>
</dbReference>
<dbReference type="GO" id="GO:0046872">
    <property type="term" value="F:metal ion binding"/>
    <property type="evidence" value="ECO:0007669"/>
    <property type="project" value="UniProtKB-KW"/>
</dbReference>
<dbReference type="GO" id="GO:0008479">
    <property type="term" value="F:tRNA-guanosine(34) queuine transglycosylase activity"/>
    <property type="evidence" value="ECO:0007669"/>
    <property type="project" value="UniProtKB-UniRule"/>
</dbReference>
<dbReference type="GO" id="GO:0008616">
    <property type="term" value="P:queuosine biosynthetic process"/>
    <property type="evidence" value="ECO:0007669"/>
    <property type="project" value="UniProtKB-UniRule"/>
</dbReference>
<dbReference type="GO" id="GO:0002099">
    <property type="term" value="P:tRNA wobble guanine modification"/>
    <property type="evidence" value="ECO:0007669"/>
    <property type="project" value="TreeGrafter"/>
</dbReference>
<dbReference type="GO" id="GO:0101030">
    <property type="term" value="P:tRNA-guanine transglycosylation"/>
    <property type="evidence" value="ECO:0007669"/>
    <property type="project" value="InterPro"/>
</dbReference>
<dbReference type="Gene3D" id="3.20.20.105">
    <property type="entry name" value="Queuine tRNA-ribosyltransferase-like"/>
    <property type="match status" value="1"/>
</dbReference>
<dbReference type="HAMAP" id="MF_00168">
    <property type="entry name" value="Q_tRNA_Tgt"/>
    <property type="match status" value="1"/>
</dbReference>
<dbReference type="InterPro" id="IPR050076">
    <property type="entry name" value="ArchSynthase1/Queuine_TRR"/>
</dbReference>
<dbReference type="InterPro" id="IPR004803">
    <property type="entry name" value="TGT"/>
</dbReference>
<dbReference type="InterPro" id="IPR036511">
    <property type="entry name" value="TGT-like_sf"/>
</dbReference>
<dbReference type="InterPro" id="IPR002616">
    <property type="entry name" value="tRNA_ribo_trans-like"/>
</dbReference>
<dbReference type="NCBIfam" id="TIGR00430">
    <property type="entry name" value="Q_tRNA_tgt"/>
    <property type="match status" value="1"/>
</dbReference>
<dbReference type="NCBIfam" id="TIGR00449">
    <property type="entry name" value="tgt_general"/>
    <property type="match status" value="1"/>
</dbReference>
<dbReference type="PANTHER" id="PTHR46499">
    <property type="entry name" value="QUEUINE TRNA-RIBOSYLTRANSFERASE"/>
    <property type="match status" value="1"/>
</dbReference>
<dbReference type="PANTHER" id="PTHR46499:SF1">
    <property type="entry name" value="QUEUINE TRNA-RIBOSYLTRANSFERASE"/>
    <property type="match status" value="1"/>
</dbReference>
<dbReference type="Pfam" id="PF01702">
    <property type="entry name" value="TGT"/>
    <property type="match status" value="1"/>
</dbReference>
<dbReference type="SUPFAM" id="SSF51713">
    <property type="entry name" value="tRNA-guanine transglycosylase"/>
    <property type="match status" value="1"/>
</dbReference>
<comment type="function">
    <text evidence="1">Catalyzes the base-exchange of a guanine (G) residue with the queuine precursor 7-aminomethyl-7-deazaguanine (PreQ1) at position 34 (anticodon wobble position) in tRNAs with GU(N) anticodons (tRNA-Asp, -Asn, -His and -Tyr). Catalysis occurs through a double-displacement mechanism. The nucleophile active site attacks the C1' of nucleotide 34 to detach the guanine base from the RNA, forming a covalent enzyme-RNA intermediate. The proton acceptor active site deprotonates the incoming PreQ1, allowing a nucleophilic attack on the C1' of the ribose to form the product. After dissociation, two additional enzymatic reactions on the tRNA convert PreQ1 to queuine (Q), resulting in the hypermodified nucleoside queuosine (7-(((4,5-cis-dihydroxy-2-cyclopenten-1-yl)amino)methyl)-7-deazaguanosine).</text>
</comment>
<comment type="catalytic activity">
    <reaction evidence="1">
        <text>7-aminomethyl-7-carbaguanine + guanosine(34) in tRNA = 7-aminomethyl-7-carbaguanosine(34) in tRNA + guanine</text>
        <dbReference type="Rhea" id="RHEA:24104"/>
        <dbReference type="Rhea" id="RHEA-COMP:10341"/>
        <dbReference type="Rhea" id="RHEA-COMP:10342"/>
        <dbReference type="ChEBI" id="CHEBI:16235"/>
        <dbReference type="ChEBI" id="CHEBI:58703"/>
        <dbReference type="ChEBI" id="CHEBI:74269"/>
        <dbReference type="ChEBI" id="CHEBI:82833"/>
        <dbReference type="EC" id="2.4.2.29"/>
    </reaction>
</comment>
<comment type="cofactor">
    <cofactor evidence="1">
        <name>Zn(2+)</name>
        <dbReference type="ChEBI" id="CHEBI:29105"/>
    </cofactor>
    <text evidence="1">Binds 1 zinc ion per subunit.</text>
</comment>
<comment type="pathway">
    <text evidence="1">tRNA modification; tRNA-queuosine biosynthesis.</text>
</comment>
<comment type="subunit">
    <text evidence="1">Homodimer. Within each dimer, one monomer is responsible for RNA recognition and catalysis, while the other monomer binds to the replacement base PreQ1.</text>
</comment>
<comment type="similarity">
    <text evidence="1">Belongs to the queuine tRNA-ribosyltransferase family.</text>
</comment>
<sequence length="372" mass="41008">MFDFQINAHCSHTRARVGCFRTPHGSVNTPRFMPVGTLATVKGITATQLADTGAQMVLANTYHLHLQPGEGIVADAGGLHRFMGWDRPLLTDSGGFQIFSLADLNRIDDHGVVFRNPRNGSQIELTPERAIEIQMALGADVAMAFDQCPPYPASESDVETACKRTHAWLERCSNTHQHANQALFGIVQGGCFPHLREQSAQIVASFGLPGIAIGGVSVGEPVEDIHRIVRQVSPLLPQDRPRYLMGIGTLREIAIAVASGIDLFDCVLPTRLGRHGTALVAGERWNLRNARFREDHTPLDQSCTCTACRHHSRAYLHHLIRNEELLGLTLLSLHNLTQLIRFTSAISQAIQDDCFSEDFAPWQPDSAAHHTW</sequence>
<accession>Q7TUM6</accession>
<proteinExistence type="inferred from homology"/>
<gene>
    <name evidence="1" type="primary">tgt</name>
    <name type="ordered locus">PMT_1862</name>
</gene>
<name>TGT_PROMM</name>
<reference key="1">
    <citation type="journal article" date="2003" name="Nature">
        <title>Genome divergence in two Prochlorococcus ecotypes reflects oceanic niche differentiation.</title>
        <authorList>
            <person name="Rocap G."/>
            <person name="Larimer F.W."/>
            <person name="Lamerdin J.E."/>
            <person name="Malfatti S."/>
            <person name="Chain P."/>
            <person name="Ahlgren N.A."/>
            <person name="Arellano A."/>
            <person name="Coleman M."/>
            <person name="Hauser L."/>
            <person name="Hess W.R."/>
            <person name="Johnson Z.I."/>
            <person name="Land M.L."/>
            <person name="Lindell D."/>
            <person name="Post A.F."/>
            <person name="Regala W."/>
            <person name="Shah M."/>
            <person name="Shaw S.L."/>
            <person name="Steglich C."/>
            <person name="Sullivan M.B."/>
            <person name="Ting C.S."/>
            <person name="Tolonen A."/>
            <person name="Webb E.A."/>
            <person name="Zinser E.R."/>
            <person name="Chisholm S.W."/>
        </authorList>
    </citation>
    <scope>NUCLEOTIDE SEQUENCE [LARGE SCALE GENOMIC DNA]</scope>
    <source>
        <strain>MIT 9313</strain>
    </source>
</reference>
<feature type="chain" id="PRO_0000135504" description="Queuine tRNA-ribosyltransferase">
    <location>
        <begin position="1"/>
        <end position="372"/>
    </location>
</feature>
<feature type="region of interest" description="RNA binding" evidence="1">
    <location>
        <begin position="246"/>
        <end position="252"/>
    </location>
</feature>
<feature type="region of interest" description="RNA binding; important for wobble base 34 recognition" evidence="1">
    <location>
        <begin position="270"/>
        <end position="274"/>
    </location>
</feature>
<feature type="active site" description="Proton acceptor" evidence="1">
    <location>
        <position position="92"/>
    </location>
</feature>
<feature type="active site" description="Nucleophile" evidence="1">
    <location>
        <position position="265"/>
    </location>
</feature>
<feature type="binding site" evidence="1">
    <location>
        <begin position="92"/>
        <end position="96"/>
    </location>
    <ligand>
        <name>substrate</name>
    </ligand>
</feature>
<feature type="binding site" evidence="1">
    <location>
        <position position="146"/>
    </location>
    <ligand>
        <name>substrate</name>
    </ligand>
</feature>
<feature type="binding site" evidence="1">
    <location>
        <position position="188"/>
    </location>
    <ligand>
        <name>substrate</name>
    </ligand>
</feature>
<feature type="binding site" evidence="1">
    <location>
        <position position="215"/>
    </location>
    <ligand>
        <name>substrate</name>
    </ligand>
</feature>
<feature type="binding site" evidence="1">
    <location>
        <position position="303"/>
    </location>
    <ligand>
        <name>Zn(2+)</name>
        <dbReference type="ChEBI" id="CHEBI:29105"/>
    </ligand>
</feature>
<feature type="binding site" evidence="1">
    <location>
        <position position="305"/>
    </location>
    <ligand>
        <name>Zn(2+)</name>
        <dbReference type="ChEBI" id="CHEBI:29105"/>
    </ligand>
</feature>
<feature type="binding site" evidence="1">
    <location>
        <position position="308"/>
    </location>
    <ligand>
        <name>Zn(2+)</name>
        <dbReference type="ChEBI" id="CHEBI:29105"/>
    </ligand>
</feature>
<feature type="binding site" evidence="1">
    <location>
        <position position="334"/>
    </location>
    <ligand>
        <name>Zn(2+)</name>
        <dbReference type="ChEBI" id="CHEBI:29105"/>
    </ligand>
</feature>
<keyword id="KW-0328">Glycosyltransferase</keyword>
<keyword id="KW-0479">Metal-binding</keyword>
<keyword id="KW-0671">Queuosine biosynthesis</keyword>
<keyword id="KW-1185">Reference proteome</keyword>
<keyword id="KW-0808">Transferase</keyword>
<keyword id="KW-0819">tRNA processing</keyword>
<keyword id="KW-0862">Zinc</keyword>